<dbReference type="EC" id="3.6.1.1" evidence="1"/>
<dbReference type="EMBL" id="BA000034">
    <property type="protein sequence ID" value="BAC64676.1"/>
    <property type="molecule type" value="Genomic_DNA"/>
</dbReference>
<dbReference type="RefSeq" id="WP_002990948.1">
    <property type="nucleotide sequence ID" value="NC_004606.1"/>
</dbReference>
<dbReference type="SMR" id="P0DD15"/>
<dbReference type="KEGG" id="sps:SPs1581"/>
<dbReference type="HOGENOM" id="CLU_025243_0_1_9"/>
<dbReference type="GO" id="GO:0005737">
    <property type="term" value="C:cytoplasm"/>
    <property type="evidence" value="ECO:0007669"/>
    <property type="project" value="UniProtKB-SubCell"/>
</dbReference>
<dbReference type="GO" id="GO:0004427">
    <property type="term" value="F:inorganic diphosphate phosphatase activity"/>
    <property type="evidence" value="ECO:0007669"/>
    <property type="project" value="UniProtKB-UniRule"/>
</dbReference>
<dbReference type="GO" id="GO:0030145">
    <property type="term" value="F:manganese ion binding"/>
    <property type="evidence" value="ECO:0007669"/>
    <property type="project" value="UniProtKB-UniRule"/>
</dbReference>
<dbReference type="FunFam" id="3.10.310.20:FF:000001">
    <property type="entry name" value="Probable manganese-dependent inorganic pyrophosphatase"/>
    <property type="match status" value="1"/>
</dbReference>
<dbReference type="FunFam" id="3.90.1640.10:FF:000001">
    <property type="entry name" value="Probable manganese-dependent inorganic pyrophosphatase"/>
    <property type="match status" value="1"/>
</dbReference>
<dbReference type="Gene3D" id="3.10.310.20">
    <property type="entry name" value="DHHA2 domain"/>
    <property type="match status" value="1"/>
</dbReference>
<dbReference type="Gene3D" id="3.90.1640.10">
    <property type="entry name" value="inorganic pyrophosphatase (n-terminal core)"/>
    <property type="match status" value="1"/>
</dbReference>
<dbReference type="HAMAP" id="MF_00207">
    <property type="entry name" value="PPase_C"/>
    <property type="match status" value="1"/>
</dbReference>
<dbReference type="InterPro" id="IPR001667">
    <property type="entry name" value="DDH_dom"/>
</dbReference>
<dbReference type="InterPro" id="IPR038763">
    <property type="entry name" value="DHH_sf"/>
</dbReference>
<dbReference type="InterPro" id="IPR004097">
    <property type="entry name" value="DHHA2"/>
</dbReference>
<dbReference type="InterPro" id="IPR038222">
    <property type="entry name" value="DHHA2_dom_sf"/>
</dbReference>
<dbReference type="InterPro" id="IPR022934">
    <property type="entry name" value="Mn-dep_inorganic_PyrPase"/>
</dbReference>
<dbReference type="InterPro" id="IPR051319">
    <property type="entry name" value="Oligoribo/pAp-PDE_c-di-AMP_PDE"/>
</dbReference>
<dbReference type="NCBIfam" id="NF003877">
    <property type="entry name" value="PRK05427.1"/>
    <property type="match status" value="1"/>
</dbReference>
<dbReference type="PANTHER" id="PTHR47618">
    <property type="entry name" value="BIFUNCTIONAL OLIGORIBONUCLEASE AND PAP PHOSPHATASE NRNA"/>
    <property type="match status" value="1"/>
</dbReference>
<dbReference type="PANTHER" id="PTHR47618:SF1">
    <property type="entry name" value="BIFUNCTIONAL OLIGORIBONUCLEASE AND PAP PHOSPHATASE NRNA"/>
    <property type="match status" value="1"/>
</dbReference>
<dbReference type="Pfam" id="PF01368">
    <property type="entry name" value="DHH"/>
    <property type="match status" value="1"/>
</dbReference>
<dbReference type="Pfam" id="PF02833">
    <property type="entry name" value="DHHA2"/>
    <property type="match status" value="1"/>
</dbReference>
<dbReference type="SMART" id="SM01131">
    <property type="entry name" value="DHHA2"/>
    <property type="match status" value="1"/>
</dbReference>
<dbReference type="SUPFAM" id="SSF64182">
    <property type="entry name" value="DHH phosphoesterases"/>
    <property type="match status" value="1"/>
</dbReference>
<proteinExistence type="inferred from homology"/>
<protein>
    <recommendedName>
        <fullName evidence="1">Probable manganese-dependent inorganic pyrophosphatase</fullName>
        <ecNumber evidence="1">3.6.1.1</ecNumber>
    </recommendedName>
    <alternativeName>
        <fullName evidence="1">Pyrophosphate phospho-hydrolase</fullName>
        <shortName evidence="1">PPase</shortName>
    </alternativeName>
</protein>
<comment type="catalytic activity">
    <reaction evidence="1">
        <text>diphosphate + H2O = 2 phosphate + H(+)</text>
        <dbReference type="Rhea" id="RHEA:24576"/>
        <dbReference type="ChEBI" id="CHEBI:15377"/>
        <dbReference type="ChEBI" id="CHEBI:15378"/>
        <dbReference type="ChEBI" id="CHEBI:33019"/>
        <dbReference type="ChEBI" id="CHEBI:43474"/>
        <dbReference type="EC" id="3.6.1.1"/>
    </reaction>
</comment>
<comment type="cofactor">
    <cofactor evidence="1">
        <name>Mn(2+)</name>
        <dbReference type="ChEBI" id="CHEBI:29035"/>
    </cofactor>
    <text evidence="1">Binds 2 manganese ions per subunit.</text>
</comment>
<comment type="subcellular location">
    <subcellularLocation>
        <location evidence="1">Cytoplasm</location>
    </subcellularLocation>
</comment>
<comment type="similarity">
    <text evidence="1">Belongs to the PPase class C family.</text>
</comment>
<organism>
    <name type="scientific">Streptococcus pyogenes serotype M3 (strain SSI-1)</name>
    <dbReference type="NCBI Taxonomy" id="193567"/>
    <lineage>
        <taxon>Bacteria</taxon>
        <taxon>Bacillati</taxon>
        <taxon>Bacillota</taxon>
        <taxon>Bacilli</taxon>
        <taxon>Lactobacillales</taxon>
        <taxon>Streptococcaceae</taxon>
        <taxon>Streptococcus</taxon>
    </lineage>
</organism>
<keyword id="KW-0963">Cytoplasm</keyword>
<keyword id="KW-0378">Hydrolase</keyword>
<keyword id="KW-0464">Manganese</keyword>
<keyword id="KW-0479">Metal-binding</keyword>
<evidence type="ECO:0000255" key="1">
    <source>
        <dbReference type="HAMAP-Rule" id="MF_00207"/>
    </source>
</evidence>
<sequence length="311" mass="33617">MSKILVFGHQNPDTDAIASSYAFDYLSQKAFGLDTEVVALGTPNEETAFALDYFGVEAPRVVESAKAQGSEQVILTDHNEFQQSIADIREVEVYGVVDHHRVANFETANPLYMRVEPVGSASSIVYRMFKENGIEVPKAIAGMLLSGLISDTLLLKSPTTHVSDHLVAEELAELAEVNLEDYGMALLKAGTNLASKSEVELIGIDAKTFELNGNAVRVAQVNTVDIAEVLERQEAIEAAIKDAMAAEGYSDFVLMITDIVNSNSEILAIGANMDKVEAAFNFTLDNNHAFLAGAVSRKKQVVPQLTESFGA</sequence>
<accession>P0DD15</accession>
<accession>P65758</accession>
<accession>Q8K8I2</accession>
<accession>Q9A1A2</accession>
<feature type="chain" id="PRO_0000411445" description="Probable manganese-dependent inorganic pyrophosphatase">
    <location>
        <begin position="1"/>
        <end position="311"/>
    </location>
</feature>
<feature type="binding site" evidence="1">
    <location>
        <position position="9"/>
    </location>
    <ligand>
        <name>Mn(2+)</name>
        <dbReference type="ChEBI" id="CHEBI:29035"/>
        <label>1</label>
    </ligand>
</feature>
<feature type="binding site" evidence="1">
    <location>
        <position position="13"/>
    </location>
    <ligand>
        <name>Mn(2+)</name>
        <dbReference type="ChEBI" id="CHEBI:29035"/>
        <label>1</label>
    </ligand>
</feature>
<feature type="binding site" evidence="1">
    <location>
        <position position="15"/>
    </location>
    <ligand>
        <name>Mn(2+)</name>
        <dbReference type="ChEBI" id="CHEBI:29035"/>
        <label>2</label>
    </ligand>
</feature>
<feature type="binding site" evidence="1">
    <location>
        <position position="77"/>
    </location>
    <ligand>
        <name>Mn(2+)</name>
        <dbReference type="ChEBI" id="CHEBI:29035"/>
        <label>1</label>
    </ligand>
</feature>
<feature type="binding site" evidence="1">
    <location>
        <position position="77"/>
    </location>
    <ligand>
        <name>Mn(2+)</name>
        <dbReference type="ChEBI" id="CHEBI:29035"/>
        <label>2</label>
    </ligand>
</feature>
<feature type="binding site" evidence="1">
    <location>
        <position position="99"/>
    </location>
    <ligand>
        <name>Mn(2+)</name>
        <dbReference type="ChEBI" id="CHEBI:29035"/>
        <label>2</label>
    </ligand>
</feature>
<feature type="binding site" evidence="1">
    <location>
        <position position="151"/>
    </location>
    <ligand>
        <name>Mn(2+)</name>
        <dbReference type="ChEBI" id="CHEBI:29035"/>
        <label>2</label>
    </ligand>
</feature>
<name>PPAC_STRPQ</name>
<gene>
    <name evidence="1" type="primary">ppaC</name>
    <name type="ordered locus">SPs1581</name>
</gene>
<reference key="1">
    <citation type="journal article" date="2003" name="Genome Res.">
        <title>Genome sequence of an M3 strain of Streptococcus pyogenes reveals a large-scale genomic rearrangement in invasive strains and new insights into phage evolution.</title>
        <authorList>
            <person name="Nakagawa I."/>
            <person name="Kurokawa K."/>
            <person name="Yamashita A."/>
            <person name="Nakata M."/>
            <person name="Tomiyasu Y."/>
            <person name="Okahashi N."/>
            <person name="Kawabata S."/>
            <person name="Yamazaki K."/>
            <person name="Shiba T."/>
            <person name="Yasunaga T."/>
            <person name="Hayashi H."/>
            <person name="Hattori M."/>
            <person name="Hamada S."/>
        </authorList>
    </citation>
    <scope>NUCLEOTIDE SEQUENCE [LARGE SCALE GENOMIC DNA]</scope>
    <source>
        <strain>SSI-1</strain>
    </source>
</reference>